<feature type="peptide" id="PRO_0000045071" description="Natriuretic peptide TNP-a" evidence="1">
    <location>
        <begin position="1"/>
        <end position="35"/>
    </location>
</feature>
<feature type="disulfide bond" evidence="1">
    <location>
        <begin position="9"/>
        <end position="25"/>
    </location>
</feature>
<proteinExistence type="evidence at protein level"/>
<comment type="function">
    <text evidence="1">Snake venom natriuretic peptide that exhibits vasoactive and probable hypotensive activity (PubMed:15652496). Is only weakly active on natriuretic peptide receptor-C (NPR3) (PubMed:15652496).</text>
</comment>
<comment type="subcellular location">
    <subcellularLocation>
        <location evidence="1">Secreted</location>
    </subcellularLocation>
</comment>
<comment type="tissue specificity">
    <text evidence="1">Expressed by the venom gland.</text>
</comment>
<comment type="mass spectrometry" mass="3651.0" method="Electrospray" evidence="1"/>
<comment type="miscellaneous">
    <text evidence="4">Negative results: does not activate natriuretic peptide receptor-A (NPR1).</text>
</comment>
<comment type="similarity">
    <text evidence="3">Belongs to the natriuretic peptide family.</text>
</comment>
<accession>P83226</accession>
<keyword id="KW-0903">Direct protein sequencing</keyword>
<keyword id="KW-1015">Disulfide bond</keyword>
<keyword id="KW-0382">Hypotensive agent</keyword>
<keyword id="KW-0964">Secreted</keyword>
<keyword id="KW-0800">Toxin</keyword>
<keyword id="KW-0838">Vasoactive</keyword>
<keyword id="KW-0840">Vasodilator</keyword>
<name>VNPA_OXYSA</name>
<protein>
    <recommendedName>
        <fullName evidence="2">Natriuretic peptide TNP-a</fullName>
    </recommendedName>
    <alternativeName>
        <fullName>Taipan natriuretic peptide</fullName>
    </alternativeName>
    <alternativeName>
        <fullName>Venom natriuretic peptide OxsSNPa</fullName>
    </alternativeName>
</protein>
<evidence type="ECO:0000269" key="1">
    <source>
    </source>
</evidence>
<evidence type="ECO:0000303" key="2">
    <source>
    </source>
</evidence>
<evidence type="ECO:0000305" key="3"/>
<evidence type="ECO:0000305" key="4">
    <source>
    </source>
</evidence>
<reference key="1">
    <citation type="journal article" date="2005" name="Biochem. Biophys. Res. Commun.">
        <title>Novel natriuretic peptides from the venom of the inland taipan (Oxyuranus microlepidotus): isolation, chemical and biological characterisation.</title>
        <authorList>
            <person name="Fry B.G."/>
            <person name="Wickramaratana J.C."/>
            <person name="Lemme S."/>
            <person name="Beuve A."/>
            <person name="Garbers D."/>
            <person name="Hodgson W.C."/>
            <person name="Alewood P.F."/>
        </authorList>
    </citation>
    <scope>PROTEIN SEQUENCE</scope>
    <scope>FUNCTION</scope>
    <scope>SUBCELLULAR LOCATION</scope>
    <scope>TISSUE SPECIFICITY</scope>
    <scope>MASS SPECTROMETRY</scope>
    <scope>DISULFIDE BOND</scope>
    <source>
        <tissue>Venom</tissue>
    </source>
</reference>
<organism>
    <name type="scientific">Oxyuranus scutellatus canni</name>
    <name type="common">Papuan taipan</name>
    <dbReference type="NCBI Taxonomy" id="183720"/>
    <lineage>
        <taxon>Eukaryota</taxon>
        <taxon>Metazoa</taxon>
        <taxon>Chordata</taxon>
        <taxon>Craniata</taxon>
        <taxon>Vertebrata</taxon>
        <taxon>Euteleostomi</taxon>
        <taxon>Lepidosauria</taxon>
        <taxon>Squamata</taxon>
        <taxon>Bifurcata</taxon>
        <taxon>Unidentata</taxon>
        <taxon>Episquamata</taxon>
        <taxon>Toxicofera</taxon>
        <taxon>Serpentes</taxon>
        <taxon>Colubroidea</taxon>
        <taxon>Elapidae</taxon>
        <taxon>Hydrophiinae</taxon>
        <taxon>Oxyuranus</taxon>
    </lineage>
</organism>
<dbReference type="SMR" id="P83226"/>
<dbReference type="GO" id="GO:0005576">
    <property type="term" value="C:extracellular region"/>
    <property type="evidence" value="ECO:0007669"/>
    <property type="project" value="UniProtKB-SubCell"/>
</dbReference>
<dbReference type="GO" id="GO:0005179">
    <property type="term" value="F:hormone activity"/>
    <property type="evidence" value="ECO:0007669"/>
    <property type="project" value="InterPro"/>
</dbReference>
<dbReference type="GO" id="GO:0090729">
    <property type="term" value="F:toxin activity"/>
    <property type="evidence" value="ECO:0007669"/>
    <property type="project" value="UniProtKB-KW"/>
</dbReference>
<dbReference type="GO" id="GO:0008217">
    <property type="term" value="P:regulation of blood pressure"/>
    <property type="evidence" value="ECO:0007669"/>
    <property type="project" value="UniProtKB-KW"/>
</dbReference>
<dbReference type="GO" id="GO:0042311">
    <property type="term" value="P:vasodilation"/>
    <property type="evidence" value="ECO:0007669"/>
    <property type="project" value="UniProtKB-KW"/>
</dbReference>
<dbReference type="InterPro" id="IPR000663">
    <property type="entry name" value="Natr_peptide"/>
</dbReference>
<dbReference type="InterPro" id="IPR030480">
    <property type="entry name" value="Natr_peptide_CS"/>
</dbReference>
<dbReference type="Pfam" id="PF00212">
    <property type="entry name" value="ANP"/>
    <property type="match status" value="1"/>
</dbReference>
<dbReference type="SMART" id="SM00183">
    <property type="entry name" value="NAT_PEP"/>
    <property type="match status" value="1"/>
</dbReference>
<dbReference type="PROSITE" id="PS00263">
    <property type="entry name" value="NATRIURETIC_PEPTIDE"/>
    <property type="match status" value="1"/>
</dbReference>
<sequence length="35" mass="3653">SDSKIGDGCFGLPLDHIGSVSGLGCNRPVQNRPKK</sequence>